<feature type="chain" id="PRO_1000009372" description="Leucine--tRNA ligase">
    <location>
        <begin position="1"/>
        <end position="817"/>
    </location>
</feature>
<feature type="short sequence motif" description="'HIGH' region">
    <location>
        <begin position="42"/>
        <end position="52"/>
    </location>
</feature>
<feature type="short sequence motif" description="'KMSKS' region">
    <location>
        <begin position="576"/>
        <end position="580"/>
    </location>
</feature>
<feature type="binding site" evidence="1">
    <location>
        <position position="579"/>
    </location>
    <ligand>
        <name>ATP</name>
        <dbReference type="ChEBI" id="CHEBI:30616"/>
    </ligand>
</feature>
<comment type="catalytic activity">
    <reaction evidence="1">
        <text>tRNA(Leu) + L-leucine + ATP = L-leucyl-tRNA(Leu) + AMP + diphosphate</text>
        <dbReference type="Rhea" id="RHEA:11688"/>
        <dbReference type="Rhea" id="RHEA-COMP:9613"/>
        <dbReference type="Rhea" id="RHEA-COMP:9622"/>
        <dbReference type="ChEBI" id="CHEBI:30616"/>
        <dbReference type="ChEBI" id="CHEBI:33019"/>
        <dbReference type="ChEBI" id="CHEBI:57427"/>
        <dbReference type="ChEBI" id="CHEBI:78442"/>
        <dbReference type="ChEBI" id="CHEBI:78494"/>
        <dbReference type="ChEBI" id="CHEBI:456215"/>
        <dbReference type="EC" id="6.1.1.4"/>
    </reaction>
</comment>
<comment type="subcellular location">
    <subcellularLocation>
        <location evidence="1">Cytoplasm</location>
    </subcellularLocation>
</comment>
<comment type="similarity">
    <text evidence="1">Belongs to the class-I aminoacyl-tRNA synthetase family.</text>
</comment>
<organism>
    <name type="scientific">Methylobacillus flagellatus (strain ATCC 51484 / DSM 6875 / VKM B-1610 / KT)</name>
    <dbReference type="NCBI Taxonomy" id="265072"/>
    <lineage>
        <taxon>Bacteria</taxon>
        <taxon>Pseudomonadati</taxon>
        <taxon>Pseudomonadota</taxon>
        <taxon>Betaproteobacteria</taxon>
        <taxon>Nitrosomonadales</taxon>
        <taxon>Methylophilaceae</taxon>
        <taxon>Methylobacillus</taxon>
    </lineage>
</organism>
<proteinExistence type="inferred from homology"/>
<gene>
    <name evidence="1" type="primary">leuS</name>
    <name type="ordered locus">Mfla_2155</name>
</gene>
<evidence type="ECO:0000255" key="1">
    <source>
        <dbReference type="HAMAP-Rule" id="MF_00049"/>
    </source>
</evidence>
<keyword id="KW-0030">Aminoacyl-tRNA synthetase</keyword>
<keyword id="KW-0067">ATP-binding</keyword>
<keyword id="KW-0963">Cytoplasm</keyword>
<keyword id="KW-0436">Ligase</keyword>
<keyword id="KW-0547">Nucleotide-binding</keyword>
<keyword id="KW-0648">Protein biosynthesis</keyword>
<keyword id="KW-1185">Reference proteome</keyword>
<protein>
    <recommendedName>
        <fullName evidence="1">Leucine--tRNA ligase</fullName>
        <ecNumber evidence="1">6.1.1.4</ecNumber>
    </recommendedName>
    <alternativeName>
        <fullName evidence="1">Leucyl-tRNA synthetase</fullName>
        <shortName evidence="1">LeuRS</shortName>
    </alternativeName>
</protein>
<sequence length="817" mass="91608">MQQQYPFRDIEQQAQQYWESNATFTATEVSDKPKYYCLSMFPYPSGKLHMGHVRNYTIGDVLSRFHRMRGYNVMQPMGWDAFGLPAENAAIKHNVAPAGWTYSNIEHMKGQLKSLGLAVDWQREIATCKPDYYRWEQWLFTELYKKGLIYKKTATVNWDPVDQTVLANEQVIDGRGWRSGALVEKRDIPQYFMKITAYAEELLADLDKLDGWPEQVKTMQRNWIGKSYGCEVEFPLAVGNGTLKVYTTRPDTLMGATYVAIAAEHALATQAAKDNPALQAFIEECKRGSVAEADLATAEKKGMNSGLFVLHPITGEKLPVWVANYVLISYGEGAVMAVPAHDERDFEFASKYKLPIKAVIKPAHGELELPLQAAYTEHGILFDSGDFNGLDFSQASDAIAAALAAKNLGKRRTQYRLRDWGISRQRYWGCPIPIVHCPSCGEVPVPAEQLPVVLPEDVVMDGVGSPIKKDPAFYETTCPSCGEKATRETDTMDTFVESSWYFARYASFDAHSSMVDERANYWLPVDQYIGGIEHAILHLLYARFFNKLMRDVGLVRHDEPFTKLLTQGMVLKDGSKMSKSKGNTVDPQELIDNYGADTARLFMMFAAPPEQSLEWSDAGVEGAHRFLKRVWTAVANHVESGIVAAFTMGDLSAELKAFRRQLHQTIEKVTDDYGRRHAFNTAIAAVMELMNAYAKIEGHDATTRAIRQEALENIILLLSPIVPHICHALWQALRPGTQLLDTRWPVANKAAMVQDEIELVLQVNGKLRGSMTVSRTLDKAAIEALAVQQECIQKYLAEGSVRKIIVVPNKLVNIVVG</sequence>
<accession>Q1GZB5</accession>
<name>SYL_METFK</name>
<reference key="1">
    <citation type="submission" date="2006-03" db="EMBL/GenBank/DDBJ databases">
        <title>Complete sequence of Methylobacillus flagellatus KT.</title>
        <authorList>
            <consortium name="US DOE Joint Genome Institute"/>
            <person name="Copeland A."/>
            <person name="Lucas S."/>
            <person name="Lapidus A."/>
            <person name="Barry K."/>
            <person name="Detter J.C."/>
            <person name="Glavina del Rio T."/>
            <person name="Hammon N."/>
            <person name="Israni S."/>
            <person name="Dalin E."/>
            <person name="Tice H."/>
            <person name="Pitluck S."/>
            <person name="Brettin T."/>
            <person name="Bruce D."/>
            <person name="Han C."/>
            <person name="Tapia R."/>
            <person name="Saunders E."/>
            <person name="Gilna P."/>
            <person name="Schmutz J."/>
            <person name="Larimer F."/>
            <person name="Land M."/>
            <person name="Kyrpides N."/>
            <person name="Anderson I."/>
            <person name="Richardson P."/>
        </authorList>
    </citation>
    <scope>NUCLEOTIDE SEQUENCE [LARGE SCALE GENOMIC DNA]</scope>
    <source>
        <strain>ATCC 51484 / DSM 6875 / VKM B-1610 / KT</strain>
    </source>
</reference>
<dbReference type="EC" id="6.1.1.4" evidence="1"/>
<dbReference type="EMBL" id="CP000284">
    <property type="protein sequence ID" value="ABE50422.1"/>
    <property type="molecule type" value="Genomic_DNA"/>
</dbReference>
<dbReference type="RefSeq" id="WP_011480376.1">
    <property type="nucleotide sequence ID" value="NC_007947.1"/>
</dbReference>
<dbReference type="SMR" id="Q1GZB5"/>
<dbReference type="STRING" id="265072.Mfla_2155"/>
<dbReference type="KEGG" id="mfa:Mfla_2155"/>
<dbReference type="eggNOG" id="COG0495">
    <property type="taxonomic scope" value="Bacteria"/>
</dbReference>
<dbReference type="HOGENOM" id="CLU_004427_0_0_4"/>
<dbReference type="OrthoDB" id="9810365at2"/>
<dbReference type="Proteomes" id="UP000002440">
    <property type="component" value="Chromosome"/>
</dbReference>
<dbReference type="GO" id="GO:0005829">
    <property type="term" value="C:cytosol"/>
    <property type="evidence" value="ECO:0007669"/>
    <property type="project" value="TreeGrafter"/>
</dbReference>
<dbReference type="GO" id="GO:0002161">
    <property type="term" value="F:aminoacyl-tRNA deacylase activity"/>
    <property type="evidence" value="ECO:0007669"/>
    <property type="project" value="InterPro"/>
</dbReference>
<dbReference type="GO" id="GO:0005524">
    <property type="term" value="F:ATP binding"/>
    <property type="evidence" value="ECO:0007669"/>
    <property type="project" value="UniProtKB-UniRule"/>
</dbReference>
<dbReference type="GO" id="GO:0004823">
    <property type="term" value="F:leucine-tRNA ligase activity"/>
    <property type="evidence" value="ECO:0007669"/>
    <property type="project" value="UniProtKB-UniRule"/>
</dbReference>
<dbReference type="GO" id="GO:0006429">
    <property type="term" value="P:leucyl-tRNA aminoacylation"/>
    <property type="evidence" value="ECO:0007669"/>
    <property type="project" value="UniProtKB-UniRule"/>
</dbReference>
<dbReference type="CDD" id="cd07958">
    <property type="entry name" value="Anticodon_Ia_Leu_BEm"/>
    <property type="match status" value="1"/>
</dbReference>
<dbReference type="CDD" id="cd00812">
    <property type="entry name" value="LeuRS_core"/>
    <property type="match status" value="1"/>
</dbReference>
<dbReference type="FunFam" id="1.10.730.10:FF:000003">
    <property type="entry name" value="Leucine--tRNA ligase"/>
    <property type="match status" value="1"/>
</dbReference>
<dbReference type="FunFam" id="3.10.20.590:FF:000001">
    <property type="entry name" value="Leucine--tRNA ligase"/>
    <property type="match status" value="1"/>
</dbReference>
<dbReference type="FunFam" id="3.40.50.620:FF:000003">
    <property type="entry name" value="Leucine--tRNA ligase"/>
    <property type="match status" value="1"/>
</dbReference>
<dbReference type="FunFam" id="3.40.50.620:FF:000124">
    <property type="entry name" value="Leucine--tRNA ligase"/>
    <property type="match status" value="1"/>
</dbReference>
<dbReference type="Gene3D" id="3.10.20.590">
    <property type="match status" value="1"/>
</dbReference>
<dbReference type="Gene3D" id="3.40.50.620">
    <property type="entry name" value="HUPs"/>
    <property type="match status" value="2"/>
</dbReference>
<dbReference type="Gene3D" id="1.10.730.10">
    <property type="entry name" value="Isoleucyl-tRNA Synthetase, Domain 1"/>
    <property type="match status" value="1"/>
</dbReference>
<dbReference type="HAMAP" id="MF_00049_B">
    <property type="entry name" value="Leu_tRNA_synth_B"/>
    <property type="match status" value="1"/>
</dbReference>
<dbReference type="InterPro" id="IPR001412">
    <property type="entry name" value="aa-tRNA-synth_I_CS"/>
</dbReference>
<dbReference type="InterPro" id="IPR002300">
    <property type="entry name" value="aa-tRNA-synth_Ia"/>
</dbReference>
<dbReference type="InterPro" id="IPR002302">
    <property type="entry name" value="Leu-tRNA-ligase"/>
</dbReference>
<dbReference type="InterPro" id="IPR025709">
    <property type="entry name" value="Leu_tRNA-synth_edit"/>
</dbReference>
<dbReference type="InterPro" id="IPR013155">
    <property type="entry name" value="M/V/L/I-tRNA-synth_anticd-bd"/>
</dbReference>
<dbReference type="InterPro" id="IPR015413">
    <property type="entry name" value="Methionyl/Leucyl_tRNA_Synth"/>
</dbReference>
<dbReference type="InterPro" id="IPR014729">
    <property type="entry name" value="Rossmann-like_a/b/a_fold"/>
</dbReference>
<dbReference type="InterPro" id="IPR009080">
    <property type="entry name" value="tRNAsynth_Ia_anticodon-bd"/>
</dbReference>
<dbReference type="InterPro" id="IPR009008">
    <property type="entry name" value="Val/Leu/Ile-tRNA-synth_edit"/>
</dbReference>
<dbReference type="NCBIfam" id="TIGR00396">
    <property type="entry name" value="leuS_bact"/>
    <property type="match status" value="1"/>
</dbReference>
<dbReference type="PANTHER" id="PTHR43740:SF2">
    <property type="entry name" value="LEUCINE--TRNA LIGASE, MITOCHONDRIAL"/>
    <property type="match status" value="1"/>
</dbReference>
<dbReference type="PANTHER" id="PTHR43740">
    <property type="entry name" value="LEUCYL-TRNA SYNTHETASE"/>
    <property type="match status" value="1"/>
</dbReference>
<dbReference type="Pfam" id="PF08264">
    <property type="entry name" value="Anticodon_1"/>
    <property type="match status" value="1"/>
</dbReference>
<dbReference type="Pfam" id="PF00133">
    <property type="entry name" value="tRNA-synt_1"/>
    <property type="match status" value="1"/>
</dbReference>
<dbReference type="Pfam" id="PF13603">
    <property type="entry name" value="tRNA-synt_1_2"/>
    <property type="match status" value="1"/>
</dbReference>
<dbReference type="Pfam" id="PF09334">
    <property type="entry name" value="tRNA-synt_1g"/>
    <property type="match status" value="1"/>
</dbReference>
<dbReference type="PRINTS" id="PR00985">
    <property type="entry name" value="TRNASYNTHLEU"/>
</dbReference>
<dbReference type="SUPFAM" id="SSF47323">
    <property type="entry name" value="Anticodon-binding domain of a subclass of class I aminoacyl-tRNA synthetases"/>
    <property type="match status" value="1"/>
</dbReference>
<dbReference type="SUPFAM" id="SSF52374">
    <property type="entry name" value="Nucleotidylyl transferase"/>
    <property type="match status" value="1"/>
</dbReference>
<dbReference type="SUPFAM" id="SSF50677">
    <property type="entry name" value="ValRS/IleRS/LeuRS editing domain"/>
    <property type="match status" value="1"/>
</dbReference>
<dbReference type="PROSITE" id="PS00178">
    <property type="entry name" value="AA_TRNA_LIGASE_I"/>
    <property type="match status" value="1"/>
</dbReference>